<gene>
    <name evidence="1" type="primary">dnaA</name>
    <name type="ordered locus">TTE0001</name>
</gene>
<organism>
    <name type="scientific">Caldanaerobacter subterraneus subsp. tengcongensis (strain DSM 15242 / JCM 11007 / NBRC 100824 / MB4)</name>
    <name type="common">Thermoanaerobacter tengcongensis</name>
    <dbReference type="NCBI Taxonomy" id="273068"/>
    <lineage>
        <taxon>Bacteria</taxon>
        <taxon>Bacillati</taxon>
        <taxon>Bacillota</taxon>
        <taxon>Clostridia</taxon>
        <taxon>Thermoanaerobacterales</taxon>
        <taxon>Thermoanaerobacteraceae</taxon>
        <taxon>Caldanaerobacter</taxon>
    </lineage>
</organism>
<evidence type="ECO:0000255" key="1">
    <source>
        <dbReference type="HAMAP-Rule" id="MF_00377"/>
    </source>
</evidence>
<accession>Q8RDL6</accession>
<protein>
    <recommendedName>
        <fullName evidence="1">Chromosomal replication initiator protein DnaA</fullName>
    </recommendedName>
</protein>
<feature type="chain" id="PRO_0000114289" description="Chromosomal replication initiator protein DnaA">
    <location>
        <begin position="1"/>
        <end position="443"/>
    </location>
</feature>
<feature type="region of interest" description="Domain I, interacts with DnaA modulators" evidence="1">
    <location>
        <begin position="1"/>
        <end position="73"/>
    </location>
</feature>
<feature type="region of interest" description="Domain II" evidence="1">
    <location>
        <begin position="73"/>
        <end position="106"/>
    </location>
</feature>
<feature type="region of interest" description="Domain III, AAA+ region" evidence="1">
    <location>
        <begin position="107"/>
        <end position="323"/>
    </location>
</feature>
<feature type="region of interest" description="Domain IV, binds dsDNA" evidence="1">
    <location>
        <begin position="324"/>
        <end position="443"/>
    </location>
</feature>
<feature type="binding site" evidence="1">
    <location>
        <position position="151"/>
    </location>
    <ligand>
        <name>ATP</name>
        <dbReference type="ChEBI" id="CHEBI:30616"/>
    </ligand>
</feature>
<feature type="binding site" evidence="1">
    <location>
        <position position="153"/>
    </location>
    <ligand>
        <name>ATP</name>
        <dbReference type="ChEBI" id="CHEBI:30616"/>
    </ligand>
</feature>
<feature type="binding site" evidence="1">
    <location>
        <position position="154"/>
    </location>
    <ligand>
        <name>ATP</name>
        <dbReference type="ChEBI" id="CHEBI:30616"/>
    </ligand>
</feature>
<feature type="binding site" evidence="1">
    <location>
        <position position="155"/>
    </location>
    <ligand>
        <name>ATP</name>
        <dbReference type="ChEBI" id="CHEBI:30616"/>
    </ligand>
</feature>
<sequence length="443" mass="51364">MYGDYRQIWERIVEVIKSELTPTSYNTWLVHIKPLAFAEDTLFLSTPNTFTKNIINGRYINIIYDAASKVTNRFIEIKILSEDEEEYREIKESIERENSSESTLLSTLNPKYTFDTFVVGNSNKLAHAACLAVAQSPAKAYNPLFIYGGVGLGKTHLMHAIGHFINKNHAGYKIMYVTSETFTNELVNSIKDDKNEEFRNKYRNIDVLLIDDIQFIANKERTQEEFFHTFNTLYEANKQIVISSDRPPKEIPTLEERLRSRFEWGLIADIQPPDYETRVAILKKKAQSENLNIPDEVLAYVAEKIQSNIRELEGALIRIVAFATLTKSNIDLELTKHALKDIVSNKTREITVKLIQEEVCKYYNIKLEDFRSRKRTKNIAYPRQIAMYLARELTDLSLPKIGEEFGKDHTTVIHAYEKISNEIKQDESLARQIEELKKRIKGY</sequence>
<reference key="1">
    <citation type="journal article" date="2002" name="Genome Res.">
        <title>A complete sequence of the T. tengcongensis genome.</title>
        <authorList>
            <person name="Bao Q."/>
            <person name="Tian Y."/>
            <person name="Li W."/>
            <person name="Xu Z."/>
            <person name="Xuan Z."/>
            <person name="Hu S."/>
            <person name="Dong W."/>
            <person name="Yang J."/>
            <person name="Chen Y."/>
            <person name="Xue Y."/>
            <person name="Xu Y."/>
            <person name="Lai X."/>
            <person name="Huang L."/>
            <person name="Dong X."/>
            <person name="Ma Y."/>
            <person name="Ling L."/>
            <person name="Tan H."/>
            <person name="Chen R."/>
            <person name="Wang J."/>
            <person name="Yu J."/>
            <person name="Yang H."/>
        </authorList>
    </citation>
    <scope>NUCLEOTIDE SEQUENCE [LARGE SCALE GENOMIC DNA]</scope>
    <source>
        <strain>DSM 15242 / JCM 11007 / NBRC 100824 / MB4</strain>
    </source>
</reference>
<name>DNAA_CALS4</name>
<proteinExistence type="inferred from homology"/>
<comment type="function">
    <text evidence="1">Plays an essential role in the initiation and regulation of chromosomal replication. ATP-DnaA binds to the origin of replication (oriC) to initiate formation of the DNA replication initiation complex once per cell cycle. Binds the DnaA box (a 9 base pair repeat at the origin) and separates the double-stranded (ds)DNA. Forms a right-handed helical filament on oriC DNA; dsDNA binds to the exterior of the filament while single-stranded (ss)DNA is stabiized in the filament's interior. The ATP-DnaA-oriC complex binds and stabilizes one strand of the AT-rich DNA unwinding element (DUE), permitting loading of DNA polymerase. After initiation quickly degrades to an ADP-DnaA complex that is not apt for DNA replication. Binds acidic phospholipids.</text>
</comment>
<comment type="subunit">
    <text evidence="1">Oligomerizes as a right-handed, spiral filament on DNA at oriC.</text>
</comment>
<comment type="subcellular location">
    <subcellularLocation>
        <location evidence="1">Cytoplasm</location>
    </subcellularLocation>
</comment>
<comment type="domain">
    <text evidence="1">Domain I is involved in oligomerization and binding regulators, domain II is flexibile and of varying length in different bacteria, domain III forms the AAA+ region, while domain IV binds dsDNA.</text>
</comment>
<comment type="similarity">
    <text evidence="1">Belongs to the DnaA family.</text>
</comment>
<keyword id="KW-0067">ATP-binding</keyword>
<keyword id="KW-0963">Cytoplasm</keyword>
<keyword id="KW-0235">DNA replication</keyword>
<keyword id="KW-0238">DNA-binding</keyword>
<keyword id="KW-0446">Lipid-binding</keyword>
<keyword id="KW-0547">Nucleotide-binding</keyword>
<keyword id="KW-1185">Reference proteome</keyword>
<dbReference type="EMBL" id="AE008691">
    <property type="protein sequence ID" value="AAM23318.1"/>
    <property type="molecule type" value="Genomic_DNA"/>
</dbReference>
<dbReference type="RefSeq" id="WP_011024539.1">
    <property type="nucleotide sequence ID" value="NZ_JANUCV010000001.1"/>
</dbReference>
<dbReference type="SMR" id="Q8RDL6"/>
<dbReference type="STRING" id="273068.TTE0001"/>
<dbReference type="KEGG" id="tte:TTE0001"/>
<dbReference type="eggNOG" id="COG0593">
    <property type="taxonomic scope" value="Bacteria"/>
</dbReference>
<dbReference type="HOGENOM" id="CLU_026910_3_1_9"/>
<dbReference type="OrthoDB" id="9807019at2"/>
<dbReference type="Proteomes" id="UP000000555">
    <property type="component" value="Chromosome"/>
</dbReference>
<dbReference type="GO" id="GO:0005737">
    <property type="term" value="C:cytoplasm"/>
    <property type="evidence" value="ECO:0007669"/>
    <property type="project" value="UniProtKB-SubCell"/>
</dbReference>
<dbReference type="GO" id="GO:0005886">
    <property type="term" value="C:plasma membrane"/>
    <property type="evidence" value="ECO:0007669"/>
    <property type="project" value="TreeGrafter"/>
</dbReference>
<dbReference type="GO" id="GO:0005524">
    <property type="term" value="F:ATP binding"/>
    <property type="evidence" value="ECO:0007669"/>
    <property type="project" value="UniProtKB-UniRule"/>
</dbReference>
<dbReference type="GO" id="GO:0016887">
    <property type="term" value="F:ATP hydrolysis activity"/>
    <property type="evidence" value="ECO:0007669"/>
    <property type="project" value="InterPro"/>
</dbReference>
<dbReference type="GO" id="GO:0003688">
    <property type="term" value="F:DNA replication origin binding"/>
    <property type="evidence" value="ECO:0007669"/>
    <property type="project" value="UniProtKB-UniRule"/>
</dbReference>
<dbReference type="GO" id="GO:0008289">
    <property type="term" value="F:lipid binding"/>
    <property type="evidence" value="ECO:0007669"/>
    <property type="project" value="UniProtKB-KW"/>
</dbReference>
<dbReference type="GO" id="GO:0006270">
    <property type="term" value="P:DNA replication initiation"/>
    <property type="evidence" value="ECO:0007669"/>
    <property type="project" value="UniProtKB-UniRule"/>
</dbReference>
<dbReference type="GO" id="GO:0006275">
    <property type="term" value="P:regulation of DNA replication"/>
    <property type="evidence" value="ECO:0007669"/>
    <property type="project" value="UniProtKB-UniRule"/>
</dbReference>
<dbReference type="CDD" id="cd00009">
    <property type="entry name" value="AAA"/>
    <property type="match status" value="1"/>
</dbReference>
<dbReference type="CDD" id="cd06571">
    <property type="entry name" value="Bac_DnaA_C"/>
    <property type="match status" value="1"/>
</dbReference>
<dbReference type="FunFam" id="1.10.1750.10:FF:000002">
    <property type="entry name" value="Chromosomal replication initiator protein DnaA"/>
    <property type="match status" value="1"/>
</dbReference>
<dbReference type="FunFam" id="1.10.8.60:FF:000003">
    <property type="entry name" value="Chromosomal replication initiator protein DnaA"/>
    <property type="match status" value="1"/>
</dbReference>
<dbReference type="FunFam" id="3.40.50.300:FF:000150">
    <property type="entry name" value="Chromosomal replication initiator protein DnaA"/>
    <property type="match status" value="1"/>
</dbReference>
<dbReference type="Gene3D" id="1.10.1750.10">
    <property type="match status" value="1"/>
</dbReference>
<dbReference type="Gene3D" id="1.10.8.60">
    <property type="match status" value="1"/>
</dbReference>
<dbReference type="Gene3D" id="3.30.300.180">
    <property type="match status" value="1"/>
</dbReference>
<dbReference type="Gene3D" id="3.40.50.300">
    <property type="entry name" value="P-loop containing nucleotide triphosphate hydrolases"/>
    <property type="match status" value="1"/>
</dbReference>
<dbReference type="HAMAP" id="MF_00377">
    <property type="entry name" value="DnaA_bact"/>
    <property type="match status" value="1"/>
</dbReference>
<dbReference type="InterPro" id="IPR003593">
    <property type="entry name" value="AAA+_ATPase"/>
</dbReference>
<dbReference type="InterPro" id="IPR001957">
    <property type="entry name" value="Chromosome_initiator_DnaA"/>
</dbReference>
<dbReference type="InterPro" id="IPR020591">
    <property type="entry name" value="Chromosome_initiator_DnaA-like"/>
</dbReference>
<dbReference type="InterPro" id="IPR018312">
    <property type="entry name" value="Chromosome_initiator_DnaA_CS"/>
</dbReference>
<dbReference type="InterPro" id="IPR013159">
    <property type="entry name" value="DnaA_C"/>
</dbReference>
<dbReference type="InterPro" id="IPR013317">
    <property type="entry name" value="DnaA_dom"/>
</dbReference>
<dbReference type="InterPro" id="IPR024633">
    <property type="entry name" value="DnaA_N_dom"/>
</dbReference>
<dbReference type="InterPro" id="IPR038454">
    <property type="entry name" value="DnaA_N_sf"/>
</dbReference>
<dbReference type="InterPro" id="IPR027417">
    <property type="entry name" value="P-loop_NTPase"/>
</dbReference>
<dbReference type="InterPro" id="IPR010921">
    <property type="entry name" value="Trp_repressor/repl_initiator"/>
</dbReference>
<dbReference type="NCBIfam" id="TIGR00362">
    <property type="entry name" value="DnaA"/>
    <property type="match status" value="1"/>
</dbReference>
<dbReference type="NCBIfam" id="NF010686">
    <property type="entry name" value="PRK14086.1"/>
    <property type="match status" value="1"/>
</dbReference>
<dbReference type="PANTHER" id="PTHR30050">
    <property type="entry name" value="CHROMOSOMAL REPLICATION INITIATOR PROTEIN DNAA"/>
    <property type="match status" value="1"/>
</dbReference>
<dbReference type="PANTHER" id="PTHR30050:SF2">
    <property type="entry name" value="CHROMOSOMAL REPLICATION INITIATOR PROTEIN DNAA"/>
    <property type="match status" value="1"/>
</dbReference>
<dbReference type="Pfam" id="PF00308">
    <property type="entry name" value="Bac_DnaA"/>
    <property type="match status" value="1"/>
</dbReference>
<dbReference type="Pfam" id="PF08299">
    <property type="entry name" value="Bac_DnaA_C"/>
    <property type="match status" value="1"/>
</dbReference>
<dbReference type="Pfam" id="PF11638">
    <property type="entry name" value="DnaA_N"/>
    <property type="match status" value="1"/>
</dbReference>
<dbReference type="PRINTS" id="PR00051">
    <property type="entry name" value="DNAA"/>
</dbReference>
<dbReference type="SMART" id="SM00382">
    <property type="entry name" value="AAA"/>
    <property type="match status" value="1"/>
</dbReference>
<dbReference type="SMART" id="SM00760">
    <property type="entry name" value="Bac_DnaA_C"/>
    <property type="match status" value="1"/>
</dbReference>
<dbReference type="SUPFAM" id="SSF52540">
    <property type="entry name" value="P-loop containing nucleoside triphosphate hydrolases"/>
    <property type="match status" value="1"/>
</dbReference>
<dbReference type="SUPFAM" id="SSF48295">
    <property type="entry name" value="TrpR-like"/>
    <property type="match status" value="1"/>
</dbReference>
<dbReference type="PROSITE" id="PS01008">
    <property type="entry name" value="DNAA"/>
    <property type="match status" value="1"/>
</dbReference>